<keyword id="KW-0028">Amino-acid biosynthesis</keyword>
<keyword id="KW-0963">Cytoplasm</keyword>
<keyword id="KW-0368">Histidine biosynthesis</keyword>
<keyword id="KW-0456">Lyase</keyword>
<organism>
    <name type="scientific">Clostridium botulinum (strain Kyoto / Type A2)</name>
    <dbReference type="NCBI Taxonomy" id="536232"/>
    <lineage>
        <taxon>Bacteria</taxon>
        <taxon>Bacillati</taxon>
        <taxon>Bacillota</taxon>
        <taxon>Clostridia</taxon>
        <taxon>Eubacteriales</taxon>
        <taxon>Clostridiaceae</taxon>
        <taxon>Clostridium</taxon>
    </lineage>
</organism>
<protein>
    <recommendedName>
        <fullName evidence="1">Imidazoleglycerol-phosphate dehydratase</fullName>
        <shortName evidence="1">IGPD</shortName>
        <ecNumber evidence="1">4.2.1.19</ecNumber>
    </recommendedName>
</protein>
<feature type="chain" id="PRO_1000190609" description="Imidazoleglycerol-phosphate dehydratase">
    <location>
        <begin position="1"/>
        <end position="196"/>
    </location>
</feature>
<accession>C1FN38</accession>
<reference key="1">
    <citation type="submission" date="2008-10" db="EMBL/GenBank/DDBJ databases">
        <title>Genome sequence of Clostridium botulinum A2 Kyoto.</title>
        <authorList>
            <person name="Shrivastava S."/>
            <person name="Brinkac L.M."/>
            <person name="Brown J.L."/>
            <person name="Bruce D."/>
            <person name="Detter C.C."/>
            <person name="Johnson E.A."/>
            <person name="Munk C.A."/>
            <person name="Smith L.A."/>
            <person name="Smith T.J."/>
            <person name="Sutton G."/>
            <person name="Brettin T.S."/>
        </authorList>
    </citation>
    <scope>NUCLEOTIDE SEQUENCE [LARGE SCALE GENOMIC DNA]</scope>
    <source>
        <strain>Kyoto / Type A2</strain>
    </source>
</reference>
<comment type="catalytic activity">
    <reaction evidence="1">
        <text>D-erythro-1-(imidazol-4-yl)glycerol 3-phosphate = 3-(imidazol-4-yl)-2-oxopropyl phosphate + H2O</text>
        <dbReference type="Rhea" id="RHEA:11040"/>
        <dbReference type="ChEBI" id="CHEBI:15377"/>
        <dbReference type="ChEBI" id="CHEBI:57766"/>
        <dbReference type="ChEBI" id="CHEBI:58278"/>
        <dbReference type="EC" id="4.2.1.19"/>
    </reaction>
</comment>
<comment type="pathway">
    <text evidence="1">Amino-acid biosynthesis; L-histidine biosynthesis; L-histidine from 5-phospho-alpha-D-ribose 1-diphosphate: step 6/9.</text>
</comment>
<comment type="subcellular location">
    <subcellularLocation>
        <location evidence="1">Cytoplasm</location>
    </subcellularLocation>
</comment>
<comment type="similarity">
    <text evidence="1">Belongs to the imidazoleglycerol-phosphate dehydratase family.</text>
</comment>
<dbReference type="EC" id="4.2.1.19" evidence="1"/>
<dbReference type="EMBL" id="CP001581">
    <property type="protein sequence ID" value="ACO84346.1"/>
    <property type="molecule type" value="Genomic_DNA"/>
</dbReference>
<dbReference type="RefSeq" id="WP_003358586.1">
    <property type="nucleotide sequence ID" value="NC_012563.1"/>
</dbReference>
<dbReference type="SMR" id="C1FN38"/>
<dbReference type="KEGG" id="cby:CLM_1809"/>
<dbReference type="eggNOG" id="COG0131">
    <property type="taxonomic scope" value="Bacteria"/>
</dbReference>
<dbReference type="HOGENOM" id="CLU_044308_3_0_9"/>
<dbReference type="UniPathway" id="UPA00031">
    <property type="reaction ID" value="UER00011"/>
</dbReference>
<dbReference type="Proteomes" id="UP000001374">
    <property type="component" value="Chromosome"/>
</dbReference>
<dbReference type="GO" id="GO:0005737">
    <property type="term" value="C:cytoplasm"/>
    <property type="evidence" value="ECO:0007669"/>
    <property type="project" value="UniProtKB-SubCell"/>
</dbReference>
<dbReference type="GO" id="GO:0004424">
    <property type="term" value="F:imidazoleglycerol-phosphate dehydratase activity"/>
    <property type="evidence" value="ECO:0007669"/>
    <property type="project" value="UniProtKB-UniRule"/>
</dbReference>
<dbReference type="GO" id="GO:0000105">
    <property type="term" value="P:L-histidine biosynthetic process"/>
    <property type="evidence" value="ECO:0007669"/>
    <property type="project" value="UniProtKB-UniRule"/>
</dbReference>
<dbReference type="CDD" id="cd07914">
    <property type="entry name" value="IGPD"/>
    <property type="match status" value="1"/>
</dbReference>
<dbReference type="FunFam" id="3.30.230.40:FF:000001">
    <property type="entry name" value="Imidazoleglycerol-phosphate dehydratase HisB"/>
    <property type="match status" value="1"/>
</dbReference>
<dbReference type="FunFam" id="3.30.230.40:FF:000003">
    <property type="entry name" value="Imidazoleglycerol-phosphate dehydratase HisB"/>
    <property type="match status" value="1"/>
</dbReference>
<dbReference type="Gene3D" id="3.30.230.40">
    <property type="entry name" value="Imidazole glycerol phosphate dehydratase, domain 1"/>
    <property type="match status" value="2"/>
</dbReference>
<dbReference type="HAMAP" id="MF_00076">
    <property type="entry name" value="HisB"/>
    <property type="match status" value="1"/>
</dbReference>
<dbReference type="InterPro" id="IPR038494">
    <property type="entry name" value="IGPD_sf"/>
</dbReference>
<dbReference type="InterPro" id="IPR000807">
    <property type="entry name" value="ImidazoleglycerolP_deHydtase"/>
</dbReference>
<dbReference type="InterPro" id="IPR020565">
    <property type="entry name" value="ImidazoleglycerP_deHydtase_CS"/>
</dbReference>
<dbReference type="InterPro" id="IPR020568">
    <property type="entry name" value="Ribosomal_Su5_D2-typ_SF"/>
</dbReference>
<dbReference type="NCBIfam" id="NF002107">
    <property type="entry name" value="PRK00951.1-2"/>
    <property type="match status" value="1"/>
</dbReference>
<dbReference type="NCBIfam" id="NF002111">
    <property type="entry name" value="PRK00951.2-1"/>
    <property type="match status" value="1"/>
</dbReference>
<dbReference type="NCBIfam" id="NF002112">
    <property type="entry name" value="PRK00951.2-2"/>
    <property type="match status" value="1"/>
</dbReference>
<dbReference type="NCBIfam" id="NF002114">
    <property type="entry name" value="PRK00951.2-4"/>
    <property type="match status" value="1"/>
</dbReference>
<dbReference type="PANTHER" id="PTHR23133:SF2">
    <property type="entry name" value="IMIDAZOLEGLYCEROL-PHOSPHATE DEHYDRATASE"/>
    <property type="match status" value="1"/>
</dbReference>
<dbReference type="PANTHER" id="PTHR23133">
    <property type="entry name" value="IMIDAZOLEGLYCEROL-PHOSPHATE DEHYDRATASE HIS7"/>
    <property type="match status" value="1"/>
</dbReference>
<dbReference type="Pfam" id="PF00475">
    <property type="entry name" value="IGPD"/>
    <property type="match status" value="1"/>
</dbReference>
<dbReference type="SUPFAM" id="SSF54211">
    <property type="entry name" value="Ribosomal protein S5 domain 2-like"/>
    <property type="match status" value="2"/>
</dbReference>
<dbReference type="PROSITE" id="PS00954">
    <property type="entry name" value="IGP_DEHYDRATASE_1"/>
    <property type="match status" value="1"/>
</dbReference>
<dbReference type="PROSITE" id="PS00955">
    <property type="entry name" value="IGP_DEHYDRATASE_2"/>
    <property type="match status" value="1"/>
</dbReference>
<sequence length="196" mass="21752">MKESIAKVYRKTGETEIKSEINLYGEGKYDIKTGIGFFDHMLNLMARHGLIDVKLEAKGDLQVDSHHTVEDVGIVLGESFKKALGDKKGIKRYGTSFVPMDEALASVSIDISGRPYIVCDFNFTVDKLGGMDTELVEEFLRALAFNVGITLHARVLYGKNNHHMIEAVFKALGRALREAVDRDEKINGVMSTKGTL</sequence>
<proteinExistence type="inferred from homology"/>
<name>HIS7_CLOBJ</name>
<evidence type="ECO:0000255" key="1">
    <source>
        <dbReference type="HAMAP-Rule" id="MF_00076"/>
    </source>
</evidence>
<gene>
    <name evidence="1" type="primary">hisB</name>
    <name type="ordered locus">CLM_1809</name>
</gene>